<gene>
    <name type="primary">Cnot1</name>
    <name type="synonym">Kiaa1007</name>
</gene>
<accession>Q6ZQ08</accession>
<accession>B2RY28</accession>
<accession>Q3UPB7</accession>
<accession>Q8BSB4</accession>
<accession>Q8BXB2</accession>
<accession>Q8C0H2</accession>
<accession>Q8K3D8</accession>
<evidence type="ECO:0000250" key="1"/>
<evidence type="ECO:0000250" key="2">
    <source>
        <dbReference type="UniProtKB" id="A5YKK6"/>
    </source>
</evidence>
<evidence type="ECO:0000256" key="3">
    <source>
        <dbReference type="SAM" id="MobiDB-lite"/>
    </source>
</evidence>
<evidence type="ECO:0000269" key="4">
    <source>
    </source>
</evidence>
<evidence type="ECO:0000269" key="5">
    <source>
    </source>
</evidence>
<evidence type="ECO:0000269" key="6">
    <source>
    </source>
</evidence>
<evidence type="ECO:0000269" key="7">
    <source>
    </source>
</evidence>
<evidence type="ECO:0000269" key="8">
    <source>
    </source>
</evidence>
<evidence type="ECO:0000269" key="9">
    <source>
    </source>
</evidence>
<evidence type="ECO:0000269" key="10">
    <source>
    </source>
</evidence>
<evidence type="ECO:0000303" key="11">
    <source>
    </source>
</evidence>
<evidence type="ECO:0000303" key="12">
    <source>
    </source>
</evidence>
<evidence type="ECO:0000305" key="13"/>
<name>CNOT1_MOUSE</name>
<protein>
    <recommendedName>
        <fullName>CCR4-NOT transcription complex subunit 1</fullName>
    </recommendedName>
    <alternativeName>
        <fullName>CCR4-associated factor 1</fullName>
    </alternativeName>
</protein>
<comment type="function">
    <text evidence="5 10">Scaffolding component of the CCR4-NOT complex which is one of the major cellular mRNA deadenylases and is linked to various cellular processes including bulk mRNA degradation, miRNA-mediated repression, translational repression during translational initiation and general transcription regulation (PubMed:34733855). Additional complex functions may be a consequence of its influence on mRNA expression. Its scaffolding function implies its interaction with the catalytic complex module and diverse RNA-binding proteins mediating the complex recruitment to selected mRNA 3'UTRs. Involved in degradation of AU-rich element (ARE)-containing mRNAs probably via association with ZFP36. Mediates the recruitment of the CCR4-NOT complex to miRNA targets and to the RISC complex via association with TNRC6A, TNRC6B or TNRC6C. Acts as a transcriptional repressor. Represses the ligand-dependent transcriptional activation by nuclear receptors. Involved in the maintenance of embryonic stem (ES) cell identity; prevents their differentiation towards extraembryonic trophectoderm lineages. Plays a role in rapid sperm motility via mediating timely mRNA turnover (PubMed:34733855).</text>
</comment>
<comment type="subunit">
    <text evidence="2 4 8 9 10">Component of the CCR4-NOT complex; distinct complexes seem to exist that differ in the participation of probably mutually exclusive catalytic subunits (By similarity). In the complex, interacts directly with CNOT6, CNOT6L, CNOT7 or CNOT8 (By similarity). Interacts in a ligand-dependent fashion with ESR1 and RXRA (By similarity). Interacts with NANOS2, TOB1 and ZFP36 (PubMed:20133598). Interacts with TNRC6A, TNRC6B or TNRC6C; the interactions are direct (By similarity). Interacts with YTHDF2; the interaction is direct and promotes recruitment of the CCR4-NOT complex to N6-methyladenosine (m6A)-containing mRNAs, leading to their deadenylation and subsequent degradation (PubMed:32905781). Interacts with EIF4ENIF1/4E-T (By similarity). Interacts in an RNA-independent manner with BICC1 (via KH domains) (PubMed:34210974). Interacts with TEX13A; the interaction may inhibit CNOT1 binding to mRNA and subsequently CNOT1-mediated mRNA degradation (PubMed:34733855).</text>
</comment>
<comment type="interaction">
    <interactant intactId="EBI-682479">
        <id>Q6ZQ08</id>
    </interactant>
    <interactant intactId="EBI-6507212">
        <id>P60322</id>
        <label>Nanos2</label>
    </interactant>
    <organismsDiffer>false</organismsDiffer>
    <experiments>3</experiments>
</comment>
<comment type="subcellular location">
    <subcellularLocation>
        <location evidence="4">Cytoplasm</location>
        <location evidence="4">P-body</location>
    </subcellularLocation>
    <subcellularLocation>
        <location evidence="1">Nucleus</location>
    </subcellularLocation>
    <subcellularLocation>
        <location evidence="1">Cytoplasm</location>
    </subcellularLocation>
    <text>NANOS2 promotes its localization to P-body.</text>
</comment>
<comment type="alternative products">
    <event type="alternative splicing"/>
    <isoform>
        <id>Q6ZQ08-1</id>
        <name>1</name>
        <sequence type="displayed"/>
    </isoform>
    <isoform>
        <id>Q6ZQ08-2</id>
        <name>2</name>
        <sequence type="described" ref="VSP_030565 VSP_030566"/>
    </isoform>
    <isoform>
        <id>Q6ZQ08-3</id>
        <name>3</name>
        <sequence type="described" ref="VSP_030564"/>
    </isoform>
    <isoform>
        <id>Q6ZQ08-4</id>
        <name>4</name>
        <sequence type="described" ref="VSP_030565"/>
    </isoform>
</comment>
<comment type="developmental stage">
    <text evidence="5 6">Expressed in embryonic stem (ES) cells and in inner cell mass (ICM) of the blastocyst. At 8.25 dpc it is expressed in both the neuroectoderm and mesenchyme of the neural folds but not in extra-embryonic membranes (PubMed:31006510).</text>
</comment>
<comment type="domain">
    <text evidence="1">Contains Leu-Xaa-Xaa-Leu-Leu (LXXLL) motifs, a motif known to be important for the association with nuclear receptors.</text>
</comment>
<comment type="similarity">
    <text evidence="13">Belongs to the CNOT1 family.</text>
</comment>
<comment type="sequence caution" evidence="13">
    <conflict type="erroneous initiation">
        <sequence resource="EMBL-CDS" id="BAC27364"/>
    </conflict>
    <text>Truncated N-terminus.</text>
</comment>
<comment type="sequence caution" evidence="13">
    <conflict type="erroneous initiation">
        <sequence resource="EMBL-CDS" id="BAC28830"/>
    </conflict>
    <text>Truncated N-terminus.</text>
</comment>
<comment type="sequence caution" evidence="13">
    <conflict type="erroneous initiation">
        <sequence resource="EMBL-CDS" id="BAE25479"/>
    </conflict>
    <text>Truncated N-terminus.</text>
</comment>
<reference key="1">
    <citation type="journal article" date="2009" name="PLoS Biol.">
        <title>Lineage-specific biology revealed by a finished genome assembly of the mouse.</title>
        <authorList>
            <person name="Church D.M."/>
            <person name="Goodstadt L."/>
            <person name="Hillier L.W."/>
            <person name="Zody M.C."/>
            <person name="Goldstein S."/>
            <person name="She X."/>
            <person name="Bult C.J."/>
            <person name="Agarwala R."/>
            <person name="Cherry J.L."/>
            <person name="DiCuccio M."/>
            <person name="Hlavina W."/>
            <person name="Kapustin Y."/>
            <person name="Meric P."/>
            <person name="Maglott D."/>
            <person name="Birtle Z."/>
            <person name="Marques A.C."/>
            <person name="Graves T."/>
            <person name="Zhou S."/>
            <person name="Teague B."/>
            <person name="Potamousis K."/>
            <person name="Churas C."/>
            <person name="Place M."/>
            <person name="Herschleb J."/>
            <person name="Runnheim R."/>
            <person name="Forrest D."/>
            <person name="Amos-Landgraf J."/>
            <person name="Schwartz D.C."/>
            <person name="Cheng Z."/>
            <person name="Lindblad-Toh K."/>
            <person name="Eichler E.E."/>
            <person name="Ponting C.P."/>
        </authorList>
    </citation>
    <scope>NUCLEOTIDE SEQUENCE [LARGE SCALE GENOMIC DNA]</scope>
    <source>
        <strain>C57BL/6J</strain>
    </source>
</reference>
<reference key="2">
    <citation type="journal article" date="2005" name="Science">
        <title>The transcriptional landscape of the mammalian genome.</title>
        <authorList>
            <person name="Carninci P."/>
            <person name="Kasukawa T."/>
            <person name="Katayama S."/>
            <person name="Gough J."/>
            <person name="Frith M.C."/>
            <person name="Maeda N."/>
            <person name="Oyama R."/>
            <person name="Ravasi T."/>
            <person name="Lenhard B."/>
            <person name="Wells C."/>
            <person name="Kodzius R."/>
            <person name="Shimokawa K."/>
            <person name="Bajic V.B."/>
            <person name="Brenner S.E."/>
            <person name="Batalov S."/>
            <person name="Forrest A.R."/>
            <person name="Zavolan M."/>
            <person name="Davis M.J."/>
            <person name="Wilming L.G."/>
            <person name="Aidinis V."/>
            <person name="Allen J.E."/>
            <person name="Ambesi-Impiombato A."/>
            <person name="Apweiler R."/>
            <person name="Aturaliya R.N."/>
            <person name="Bailey T.L."/>
            <person name="Bansal M."/>
            <person name="Baxter L."/>
            <person name="Beisel K.W."/>
            <person name="Bersano T."/>
            <person name="Bono H."/>
            <person name="Chalk A.M."/>
            <person name="Chiu K.P."/>
            <person name="Choudhary V."/>
            <person name="Christoffels A."/>
            <person name="Clutterbuck D.R."/>
            <person name="Crowe M.L."/>
            <person name="Dalla E."/>
            <person name="Dalrymple B.P."/>
            <person name="de Bono B."/>
            <person name="Della Gatta G."/>
            <person name="di Bernardo D."/>
            <person name="Down T."/>
            <person name="Engstrom P."/>
            <person name="Fagiolini M."/>
            <person name="Faulkner G."/>
            <person name="Fletcher C.F."/>
            <person name="Fukushima T."/>
            <person name="Furuno M."/>
            <person name="Futaki S."/>
            <person name="Gariboldi M."/>
            <person name="Georgii-Hemming P."/>
            <person name="Gingeras T.R."/>
            <person name="Gojobori T."/>
            <person name="Green R.E."/>
            <person name="Gustincich S."/>
            <person name="Harbers M."/>
            <person name="Hayashi Y."/>
            <person name="Hensch T.K."/>
            <person name="Hirokawa N."/>
            <person name="Hill D."/>
            <person name="Huminiecki L."/>
            <person name="Iacono M."/>
            <person name="Ikeo K."/>
            <person name="Iwama A."/>
            <person name="Ishikawa T."/>
            <person name="Jakt M."/>
            <person name="Kanapin A."/>
            <person name="Katoh M."/>
            <person name="Kawasawa Y."/>
            <person name="Kelso J."/>
            <person name="Kitamura H."/>
            <person name="Kitano H."/>
            <person name="Kollias G."/>
            <person name="Krishnan S.P."/>
            <person name="Kruger A."/>
            <person name="Kummerfeld S.K."/>
            <person name="Kurochkin I.V."/>
            <person name="Lareau L.F."/>
            <person name="Lazarevic D."/>
            <person name="Lipovich L."/>
            <person name="Liu J."/>
            <person name="Liuni S."/>
            <person name="McWilliam S."/>
            <person name="Madan Babu M."/>
            <person name="Madera M."/>
            <person name="Marchionni L."/>
            <person name="Matsuda H."/>
            <person name="Matsuzawa S."/>
            <person name="Miki H."/>
            <person name="Mignone F."/>
            <person name="Miyake S."/>
            <person name="Morris K."/>
            <person name="Mottagui-Tabar S."/>
            <person name="Mulder N."/>
            <person name="Nakano N."/>
            <person name="Nakauchi H."/>
            <person name="Ng P."/>
            <person name="Nilsson R."/>
            <person name="Nishiguchi S."/>
            <person name="Nishikawa S."/>
            <person name="Nori F."/>
            <person name="Ohara O."/>
            <person name="Okazaki Y."/>
            <person name="Orlando V."/>
            <person name="Pang K.C."/>
            <person name="Pavan W.J."/>
            <person name="Pavesi G."/>
            <person name="Pesole G."/>
            <person name="Petrovsky N."/>
            <person name="Piazza S."/>
            <person name="Reed J."/>
            <person name="Reid J.F."/>
            <person name="Ring B.Z."/>
            <person name="Ringwald M."/>
            <person name="Rost B."/>
            <person name="Ruan Y."/>
            <person name="Salzberg S.L."/>
            <person name="Sandelin A."/>
            <person name="Schneider C."/>
            <person name="Schoenbach C."/>
            <person name="Sekiguchi K."/>
            <person name="Semple C.A."/>
            <person name="Seno S."/>
            <person name="Sessa L."/>
            <person name="Sheng Y."/>
            <person name="Shibata Y."/>
            <person name="Shimada H."/>
            <person name="Shimada K."/>
            <person name="Silva D."/>
            <person name="Sinclair B."/>
            <person name="Sperling S."/>
            <person name="Stupka E."/>
            <person name="Sugiura K."/>
            <person name="Sultana R."/>
            <person name="Takenaka Y."/>
            <person name="Taki K."/>
            <person name="Tammoja K."/>
            <person name="Tan S.L."/>
            <person name="Tang S."/>
            <person name="Taylor M.S."/>
            <person name="Tegner J."/>
            <person name="Teichmann S.A."/>
            <person name="Ueda H.R."/>
            <person name="van Nimwegen E."/>
            <person name="Verardo R."/>
            <person name="Wei C.L."/>
            <person name="Yagi K."/>
            <person name="Yamanishi H."/>
            <person name="Zabarovsky E."/>
            <person name="Zhu S."/>
            <person name="Zimmer A."/>
            <person name="Hide W."/>
            <person name="Bult C."/>
            <person name="Grimmond S.M."/>
            <person name="Teasdale R.D."/>
            <person name="Liu E.T."/>
            <person name="Brusic V."/>
            <person name="Quackenbush J."/>
            <person name="Wahlestedt C."/>
            <person name="Mattick J.S."/>
            <person name="Hume D.A."/>
            <person name="Kai C."/>
            <person name="Sasaki D."/>
            <person name="Tomaru Y."/>
            <person name="Fukuda S."/>
            <person name="Kanamori-Katayama M."/>
            <person name="Suzuki M."/>
            <person name="Aoki J."/>
            <person name="Arakawa T."/>
            <person name="Iida J."/>
            <person name="Imamura K."/>
            <person name="Itoh M."/>
            <person name="Kato T."/>
            <person name="Kawaji H."/>
            <person name="Kawagashira N."/>
            <person name="Kawashima T."/>
            <person name="Kojima M."/>
            <person name="Kondo S."/>
            <person name="Konno H."/>
            <person name="Nakano K."/>
            <person name="Ninomiya N."/>
            <person name="Nishio T."/>
            <person name="Okada M."/>
            <person name="Plessy C."/>
            <person name="Shibata K."/>
            <person name="Shiraki T."/>
            <person name="Suzuki S."/>
            <person name="Tagami M."/>
            <person name="Waki K."/>
            <person name="Watahiki A."/>
            <person name="Okamura-Oho Y."/>
            <person name="Suzuki H."/>
            <person name="Kawai J."/>
            <person name="Hayashizaki Y."/>
        </authorList>
    </citation>
    <scope>NUCLEOTIDE SEQUENCE [LARGE SCALE MRNA] OF 1-2305 (ISOFORM 3)</scope>
    <scope>NUCLEOTIDE SEQUENCE [LARGE SCALE MRNA] OF 203-847 (ISOFORM 2)</scope>
    <scope>NUCLEOTIDE SEQUENCE [LARGE SCALE MRNA] OF 533-1302 (ISOFORM 4)</scope>
    <scope>NUCLEOTIDE SEQUENCE [LARGE SCALE MRNA] OF 1819-2375 (ISOFORM 1)</scope>
    <source>
        <strain>C57BL/6J</strain>
        <tissue>Embryo</tissue>
        <tissue>Head</tissue>
        <tissue>Spleen</tissue>
        <tissue>Testis</tissue>
    </source>
</reference>
<reference key="3">
    <citation type="journal article" date="2004" name="Genome Res.">
        <title>The status, quality, and expansion of the NIH full-length cDNA project: the Mammalian Gene Collection (MGC).</title>
        <authorList>
            <consortium name="The MGC Project Team"/>
        </authorList>
    </citation>
    <scope>NUCLEOTIDE SEQUENCE [LARGE SCALE MRNA] (ISOFORM 2)</scope>
    <scope>NUCLEOTIDE SEQUENCE [LARGE SCALE MRNA] OF 1247-2375 (ISOFORM 1/2)</scope>
    <source>
        <strain>Czech II</strain>
        <tissue>Brain</tissue>
        <tissue>Mammary tumor</tissue>
    </source>
</reference>
<reference key="4">
    <citation type="journal article" date="2003" name="DNA Res.">
        <title>Prediction of the coding sequences of mouse homologues of KIAA gene: III. The complete nucleotide sequences of 500 mouse KIAA-homologous cDNAs identified by screening of terminal sequences of cDNA clones randomly sampled from size-fractionated libraries.</title>
        <authorList>
            <person name="Okazaki N."/>
            <person name="Kikuno R."/>
            <person name="Ohara R."/>
            <person name="Inamoto S."/>
            <person name="Koseki H."/>
            <person name="Hiraoka S."/>
            <person name="Saga Y."/>
            <person name="Nagase T."/>
            <person name="Ohara O."/>
            <person name="Koga H."/>
        </authorList>
    </citation>
    <scope>NUCLEOTIDE SEQUENCE [LARGE SCALE MRNA] OF 918-2375 (ISOFORM 1)</scope>
    <source>
        <tissue>Embryonic tail</tissue>
    </source>
</reference>
<reference key="5">
    <citation type="submission" date="2004-01" db="EMBL/GenBank/DDBJ databases">
        <authorList>
            <person name="Okazaki N."/>
            <person name="Kikuno R."/>
            <person name="Nagase T."/>
            <person name="Ohara O."/>
            <person name="Koga H."/>
        </authorList>
    </citation>
    <scope>SEQUENCE REVISION</scope>
</reference>
<reference key="6">
    <citation type="journal article" date="2010" name="Cell">
        <title>A tissue-specific atlas of mouse protein phosphorylation and expression.</title>
        <authorList>
            <person name="Huttlin E.L."/>
            <person name="Jedrychowski M.P."/>
            <person name="Elias J.E."/>
            <person name="Goswami T."/>
            <person name="Rad R."/>
            <person name="Beausoleil S.A."/>
            <person name="Villen J."/>
            <person name="Haas W."/>
            <person name="Sowa M.E."/>
            <person name="Gygi S.P."/>
        </authorList>
    </citation>
    <scope>IDENTIFICATION BY MASS SPECTROMETRY [LARGE SCALE ANALYSIS]</scope>
    <source>
        <tissue>Brain</tissue>
        <tissue>Brown adipose tissue</tissue>
        <tissue>Heart</tissue>
        <tissue>Kidney</tissue>
        <tissue>Liver</tissue>
        <tissue>Lung</tissue>
        <tissue>Pancreas</tissue>
        <tissue>Spleen</tissue>
        <tissue>Testis</tissue>
    </source>
</reference>
<reference key="7">
    <citation type="journal article" date="2010" name="Proc. Natl. Acad. Sci. U.S.A.">
        <title>NANOS2 interacts with the CCR4-NOT deadenylation complex and leads to suppression of specific RNAs.</title>
        <authorList>
            <person name="Suzuki A."/>
            <person name="Igarashi K."/>
            <person name="Aisaki K."/>
            <person name="Kanno J."/>
            <person name="Saga Y."/>
        </authorList>
    </citation>
    <scope>SUBCELLULAR LOCATION</scope>
    <scope>INTERACTION WITH NANOS2</scope>
</reference>
<reference key="8">
    <citation type="journal article" date="2012" name="Stem Cells">
        <title>Cnot1, Cnot2, and Cnot3 maintain mouse and human ESC identity and inhibit extraembryonic differentiation.</title>
        <authorList>
            <person name="Zheng X."/>
            <person name="Dumitru R."/>
            <person name="Lackford B.L."/>
            <person name="Freudenberg J.M."/>
            <person name="Singh A.P."/>
            <person name="Archer T.K."/>
            <person name="Jothi R."/>
            <person name="Hu G."/>
        </authorList>
    </citation>
    <scope>FUNCTION</scope>
    <scope>DEVELOPMENTAL STAGE</scope>
</reference>
<reference key="9">
    <citation type="journal article" date="2019" name="Am. J. Hum. Genet.">
        <title>A specific CNOT1 mutation results in a novel syndrome of pancreatic agenesis and holoprosencephaly through impaired pancreatic and neurological development.</title>
        <authorList>
            <person name="De Franco E."/>
            <person name="Watson R.A."/>
            <person name="Weninger W.J."/>
            <person name="Wong C.C."/>
            <person name="Flanagan S.E."/>
            <person name="Caswell R."/>
            <person name="Green A."/>
            <person name="Tudor C."/>
            <person name="Lelliott C.J."/>
            <person name="Geyer S.H."/>
            <person name="Maurer-Gesek B."/>
            <person name="Reissig L.F."/>
            <person name="Lango Allen H."/>
            <person name="Caliebe A."/>
            <person name="Siebert R."/>
            <person name="Holterhus P.M."/>
            <person name="Deeb A."/>
            <person name="Prin F."/>
            <person name="Hilbrands R."/>
            <person name="Heimberg H."/>
            <person name="Ellard S."/>
            <person name="Hattersley A.T."/>
            <person name="Barroso I."/>
        </authorList>
    </citation>
    <scope>MUTAGENESIS OF ARG-535</scope>
</reference>
<reference key="10">
    <citation type="journal article" date="2019" name="Am. J. Hum. Genet.">
        <title>A CCR4-NOT transcription complex, subunit 1, CNOT1, variant associated with holoprosencephaly.</title>
        <authorList>
            <person name="Kruszka P."/>
            <person name="Berger S.I."/>
            <person name="Weiss K."/>
            <person name="Everson J.L."/>
            <person name="Martinez A.F."/>
            <person name="Hong S."/>
            <person name="Anyane-Yeboa K."/>
            <person name="Lipinski R.J."/>
            <person name="Muenke M."/>
        </authorList>
    </citation>
    <scope>DEVELOPMENTAL STAGE</scope>
</reference>
<reference key="11">
    <citation type="journal article" date="2020" name="Cell Rep.">
        <title>YTHDF2/3 are required for somatic reprogramming through different RNA deadenylation pathways.</title>
        <authorList>
            <person name="Liu J."/>
            <person name="Gao M."/>
            <person name="Xu S."/>
            <person name="Chen Y."/>
            <person name="Wu K."/>
            <person name="Liu H."/>
            <person name="Wang J."/>
            <person name="Yang X."/>
            <person name="Wang J."/>
            <person name="Liu W."/>
            <person name="Bao X."/>
            <person name="Chen J."/>
        </authorList>
    </citation>
    <scope>INTERACTION WITH YTHDF2</scope>
</reference>
<reference key="12">
    <citation type="journal article" date="2021" name="Front. Cell Dev. Biol.">
        <title>Tex13a Optimizes Sperm Motility via Its Potential Roles in mRNA Turnover.</title>
        <authorList>
            <person name="Li Y."/>
            <person name="Mi P."/>
            <person name="Chen X."/>
            <person name="Wu J."/>
            <person name="Liu X."/>
            <person name="Tang Y."/>
            <person name="Cheng J."/>
            <person name="Huang Y."/>
            <person name="Qin W."/>
            <person name="Cheng C.Y."/>
            <person name="Sun F."/>
        </authorList>
    </citation>
    <scope>FUNCTION</scope>
    <scope>INTERACTION WITH TEX13A</scope>
</reference>
<reference key="13">
    <citation type="journal article" date="2021" name="Nat. Commun.">
        <title>Fluid flow-induced left-right asymmetric decay of Dand5 mRNA in the mouse embryo requires a Bicc1-Ccr4 RNA degradation complex.</title>
        <authorList>
            <person name="Minegishi K."/>
            <person name="Rothe B."/>
            <person name="Komatsu K.R."/>
            <person name="Ono H."/>
            <person name="Ikawa Y."/>
            <person name="Nishimura H."/>
            <person name="Katoh T.A."/>
            <person name="Kajikawa E."/>
            <person name="Sai X."/>
            <person name="Miyashita E."/>
            <person name="Takaoka K."/>
            <person name="Bando K."/>
            <person name="Kiyonari H."/>
            <person name="Yamamoto T."/>
            <person name="Saito H."/>
            <person name="Constam D.B."/>
            <person name="Hamada H."/>
        </authorList>
    </citation>
    <scope>INTERACTION WITH BICC1</scope>
</reference>
<keyword id="KW-0025">Alternative splicing</keyword>
<keyword id="KW-0963">Cytoplasm</keyword>
<keyword id="KW-0217">Developmental protein</keyword>
<keyword id="KW-0539">Nucleus</keyword>
<keyword id="KW-0597">Phosphoprotein</keyword>
<keyword id="KW-1185">Reference proteome</keyword>
<keyword id="KW-0678">Repressor</keyword>
<keyword id="KW-0943">RNA-mediated gene silencing</keyword>
<keyword id="KW-0804">Transcription</keyword>
<keyword id="KW-0805">Transcription regulation</keyword>
<keyword id="KW-0810">Translation regulation</keyword>
<dbReference type="EMBL" id="AC113951">
    <property type="status" value="NOT_ANNOTATED_CDS"/>
    <property type="molecule type" value="Genomic_DNA"/>
</dbReference>
<dbReference type="EMBL" id="AC127300">
    <property type="status" value="NOT_ANNOTATED_CDS"/>
    <property type="molecule type" value="Genomic_DNA"/>
</dbReference>
<dbReference type="EMBL" id="AK031357">
    <property type="protein sequence ID" value="BAC27364.1"/>
    <property type="status" value="ALT_INIT"/>
    <property type="molecule type" value="mRNA"/>
</dbReference>
<dbReference type="EMBL" id="AK034776">
    <property type="protein sequence ID" value="BAC28830.1"/>
    <property type="status" value="ALT_INIT"/>
    <property type="molecule type" value="mRNA"/>
</dbReference>
<dbReference type="EMBL" id="AK048177">
    <property type="protein sequence ID" value="BAC33267.1"/>
    <property type="molecule type" value="mRNA"/>
</dbReference>
<dbReference type="EMBL" id="AK143651">
    <property type="protein sequence ID" value="BAE25479.1"/>
    <property type="status" value="ALT_INIT"/>
    <property type="molecule type" value="mRNA"/>
</dbReference>
<dbReference type="EMBL" id="BC018281">
    <property type="protein sequence ID" value="AAH18281.2"/>
    <property type="molecule type" value="mRNA"/>
</dbReference>
<dbReference type="EMBL" id="BC158073">
    <property type="protein sequence ID" value="AAI58074.1"/>
    <property type="molecule type" value="mRNA"/>
</dbReference>
<dbReference type="EMBL" id="AK129258">
    <property type="protein sequence ID" value="BAC98068.2"/>
    <property type="molecule type" value="Transcribed_RNA"/>
</dbReference>
<dbReference type="CCDS" id="CCDS90442.1">
    <molecule id="Q6ZQ08-4"/>
</dbReference>
<dbReference type="RefSeq" id="NP_001359282.1">
    <molecule id="Q6ZQ08-4"/>
    <property type="nucleotide sequence ID" value="NM_001372353.1"/>
</dbReference>
<dbReference type="RefSeq" id="NP_835179.1">
    <molecule id="Q6ZQ08-2"/>
    <property type="nucleotide sequence ID" value="NM_178078.3"/>
</dbReference>
<dbReference type="RefSeq" id="XP_006530937.1">
    <property type="nucleotide sequence ID" value="XM_006530874.2"/>
</dbReference>
<dbReference type="RefSeq" id="XP_036009857.1">
    <molecule id="Q6ZQ08-1"/>
    <property type="nucleotide sequence ID" value="XM_036153964.1"/>
</dbReference>
<dbReference type="SMR" id="Q6ZQ08"/>
<dbReference type="BioGRID" id="231545">
    <property type="interactions" value="18"/>
</dbReference>
<dbReference type="CORUM" id="Q6ZQ08"/>
<dbReference type="DIP" id="DIP-46845N"/>
<dbReference type="ELM" id="Q6ZQ08"/>
<dbReference type="FunCoup" id="Q6ZQ08">
    <property type="interactions" value="3633"/>
</dbReference>
<dbReference type="IntAct" id="Q6ZQ08">
    <property type="interactions" value="19"/>
</dbReference>
<dbReference type="MINT" id="Q6ZQ08"/>
<dbReference type="STRING" id="10090.ENSMUSP00000148807"/>
<dbReference type="CarbonylDB" id="Q6ZQ08"/>
<dbReference type="GlyGen" id="Q6ZQ08">
    <property type="glycosylation" value="14 sites, 3 N-linked glycans (3 sites), 1 O-linked glycan (11 sites)"/>
</dbReference>
<dbReference type="iPTMnet" id="Q6ZQ08"/>
<dbReference type="PhosphoSitePlus" id="Q6ZQ08"/>
<dbReference type="SwissPalm" id="Q6ZQ08"/>
<dbReference type="jPOST" id="Q6ZQ08"/>
<dbReference type="PaxDb" id="10090-ENSMUSP00000096073"/>
<dbReference type="PeptideAtlas" id="Q6ZQ08"/>
<dbReference type="ProteomicsDB" id="283460">
    <molecule id="Q6ZQ08-1"/>
</dbReference>
<dbReference type="ProteomicsDB" id="283461">
    <molecule id="Q6ZQ08-2"/>
</dbReference>
<dbReference type="ProteomicsDB" id="283462">
    <molecule id="Q6ZQ08-3"/>
</dbReference>
<dbReference type="ProteomicsDB" id="283463">
    <molecule id="Q6ZQ08-4"/>
</dbReference>
<dbReference type="Pumba" id="Q6ZQ08"/>
<dbReference type="Antibodypedia" id="29121">
    <property type="antibodies" value="98 antibodies from 21 providers"/>
</dbReference>
<dbReference type="Ensembl" id="ENSMUST00000098473.11">
    <molecule id="Q6ZQ08-4"/>
    <property type="protein sequence ID" value="ENSMUSP00000096073.5"/>
    <property type="gene ID" value="ENSMUSG00000036550.17"/>
</dbReference>
<dbReference type="GeneID" id="234594"/>
<dbReference type="KEGG" id="mmu:234594"/>
<dbReference type="UCSC" id="uc009myy.1">
    <molecule id="Q6ZQ08-3"/>
    <property type="organism name" value="mouse"/>
</dbReference>
<dbReference type="UCSC" id="uc009myz.3">
    <molecule id="Q6ZQ08-2"/>
    <property type="organism name" value="mouse"/>
</dbReference>
<dbReference type="AGR" id="MGI:2442402"/>
<dbReference type="CTD" id="23019"/>
<dbReference type="MGI" id="MGI:2442402">
    <property type="gene designation" value="Cnot1"/>
</dbReference>
<dbReference type="VEuPathDB" id="HostDB:ENSMUSG00000036550"/>
<dbReference type="eggNOG" id="KOG1831">
    <property type="taxonomic scope" value="Eukaryota"/>
</dbReference>
<dbReference type="GeneTree" id="ENSGT00390000014869"/>
<dbReference type="HOGENOM" id="CLU_000286_3_0_1"/>
<dbReference type="InParanoid" id="Q6ZQ08"/>
<dbReference type="OMA" id="IDEYHCY"/>
<dbReference type="PhylomeDB" id="Q6ZQ08"/>
<dbReference type="TreeFam" id="TF105630"/>
<dbReference type="Reactome" id="R-MMU-429947">
    <property type="pathway name" value="Deadenylation of mRNA"/>
</dbReference>
<dbReference type="Reactome" id="R-MMU-6804115">
    <property type="pathway name" value="TP53 regulates transcription of additional cell cycle genes whose exact role in the p53 pathway remain uncertain"/>
</dbReference>
<dbReference type="BioGRID-ORCS" id="234594">
    <property type="hits" value="23 hits in 81 CRISPR screens"/>
</dbReference>
<dbReference type="ChiTaRS" id="Cnot1">
    <property type="organism name" value="mouse"/>
</dbReference>
<dbReference type="PRO" id="PR:Q6ZQ08"/>
<dbReference type="Proteomes" id="UP000000589">
    <property type="component" value="Chromosome 8"/>
</dbReference>
<dbReference type="RNAct" id="Q6ZQ08">
    <property type="molecule type" value="protein"/>
</dbReference>
<dbReference type="Bgee" id="ENSMUSG00000036550">
    <property type="expression patterns" value="Expressed in embryonic post-anal tail and 125 other cell types or tissues"/>
</dbReference>
<dbReference type="ExpressionAtlas" id="Q6ZQ08">
    <property type="expression patterns" value="baseline and differential"/>
</dbReference>
<dbReference type="GO" id="GO:0030014">
    <property type="term" value="C:CCR4-NOT complex"/>
    <property type="evidence" value="ECO:0000250"/>
    <property type="project" value="UniProtKB"/>
</dbReference>
<dbReference type="GO" id="GO:0030015">
    <property type="term" value="C:CCR4-NOT core complex"/>
    <property type="evidence" value="ECO:0007669"/>
    <property type="project" value="InterPro"/>
</dbReference>
<dbReference type="GO" id="GO:0005829">
    <property type="term" value="C:cytosol"/>
    <property type="evidence" value="ECO:0000304"/>
    <property type="project" value="Reactome"/>
</dbReference>
<dbReference type="GO" id="GO:0005634">
    <property type="term" value="C:nucleus"/>
    <property type="evidence" value="ECO:0007669"/>
    <property type="project" value="UniProtKB-SubCell"/>
</dbReference>
<dbReference type="GO" id="GO:0000932">
    <property type="term" value="C:P-body"/>
    <property type="evidence" value="ECO:0000314"/>
    <property type="project" value="UniProtKB"/>
</dbReference>
<dbReference type="GO" id="GO:0070016">
    <property type="term" value="F:armadillo repeat domain binding"/>
    <property type="evidence" value="ECO:0007669"/>
    <property type="project" value="Ensembl"/>
</dbReference>
<dbReference type="GO" id="GO:0060090">
    <property type="term" value="F:molecular adaptor activity"/>
    <property type="evidence" value="ECO:0007669"/>
    <property type="project" value="Ensembl"/>
</dbReference>
<dbReference type="GO" id="GO:0030331">
    <property type="term" value="F:nuclear estrogen receptor binding"/>
    <property type="evidence" value="ECO:0000250"/>
    <property type="project" value="UniProtKB"/>
</dbReference>
<dbReference type="GO" id="GO:0042974">
    <property type="term" value="F:nuclear retinoic acid receptor binding"/>
    <property type="evidence" value="ECO:0000250"/>
    <property type="project" value="UniProtKB"/>
</dbReference>
<dbReference type="GO" id="GO:0004535">
    <property type="term" value="F:poly(A)-specific ribonuclease activity"/>
    <property type="evidence" value="ECO:0007669"/>
    <property type="project" value="Ensembl"/>
</dbReference>
<dbReference type="GO" id="GO:0035195">
    <property type="term" value="P:miRNA-mediated post-transcriptional gene silencing"/>
    <property type="evidence" value="ECO:0007669"/>
    <property type="project" value="Ensembl"/>
</dbReference>
<dbReference type="GO" id="GO:0033147">
    <property type="term" value="P:negative regulation of intracellular estrogen receptor signaling pathway"/>
    <property type="evidence" value="ECO:0000250"/>
    <property type="project" value="UniProtKB"/>
</dbReference>
<dbReference type="GO" id="GO:0048387">
    <property type="term" value="P:negative regulation of retinoic acid receptor signaling pathway"/>
    <property type="evidence" value="ECO:0000250"/>
    <property type="project" value="UniProtKB"/>
</dbReference>
<dbReference type="GO" id="GO:0000122">
    <property type="term" value="P:negative regulation of transcription by RNA polymerase II"/>
    <property type="evidence" value="ECO:0000250"/>
    <property type="project" value="UniProtKB"/>
</dbReference>
<dbReference type="GO" id="GO:0017148">
    <property type="term" value="P:negative regulation of translation"/>
    <property type="evidence" value="ECO:0007669"/>
    <property type="project" value="Ensembl"/>
</dbReference>
<dbReference type="GO" id="GO:0010606">
    <property type="term" value="P:positive regulation of cytoplasmic mRNA processing body assembly"/>
    <property type="evidence" value="ECO:0000250"/>
    <property type="project" value="UniProtKB"/>
</dbReference>
<dbReference type="GO" id="GO:1900153">
    <property type="term" value="P:positive regulation of nuclear-transcribed mRNA catabolic process, deadenylation-dependent decay"/>
    <property type="evidence" value="ECO:0000250"/>
    <property type="project" value="UniProtKB"/>
</dbReference>
<dbReference type="GO" id="GO:0060213">
    <property type="term" value="P:positive regulation of nuclear-transcribed mRNA poly(A) tail shortening"/>
    <property type="evidence" value="ECO:0000250"/>
    <property type="project" value="UniProtKB"/>
</dbReference>
<dbReference type="GO" id="GO:2000036">
    <property type="term" value="P:regulation of stem cell population maintenance"/>
    <property type="evidence" value="ECO:0000315"/>
    <property type="project" value="UniProtKB"/>
</dbReference>
<dbReference type="GO" id="GO:0001829">
    <property type="term" value="P:trophectodermal cell differentiation"/>
    <property type="evidence" value="ECO:0000315"/>
    <property type="project" value="UniProtKB"/>
</dbReference>
<dbReference type="CDD" id="cd20710">
    <property type="entry name" value="NOT1_connector"/>
    <property type="match status" value="1"/>
</dbReference>
<dbReference type="FunFam" id="1.25.40.800:FF:000001">
    <property type="entry name" value="CCR4-NOT transcription complex subunit 1"/>
    <property type="match status" value="1"/>
</dbReference>
<dbReference type="FunFam" id="1.25.40.180:FF:000005">
    <property type="entry name" value="Ccr4-not transcription complex subunit 1 isoform"/>
    <property type="match status" value="1"/>
</dbReference>
<dbReference type="FunFam" id="1.25.40.790:FF:000001">
    <property type="entry name" value="Ccr4-not transcription complex subunit 1 isoform"/>
    <property type="match status" value="1"/>
</dbReference>
<dbReference type="FunFam" id="1.25.40.840:FF:000001">
    <property type="entry name" value="Ccr4-not transcription complex subunit 1 isoform"/>
    <property type="match status" value="1"/>
</dbReference>
<dbReference type="Gene3D" id="1.25.40.180">
    <property type="match status" value="1"/>
</dbReference>
<dbReference type="Gene3D" id="1.25.40.790">
    <property type="match status" value="1"/>
</dbReference>
<dbReference type="Gene3D" id="1.25.40.800">
    <property type="match status" value="1"/>
</dbReference>
<dbReference type="Gene3D" id="1.25.40.840">
    <property type="entry name" value="CCR4-NOT transcription complex subunit 1 TTP binding domain"/>
    <property type="match status" value="1"/>
</dbReference>
<dbReference type="InterPro" id="IPR007196">
    <property type="entry name" value="CCR4-Not_Not1_C"/>
</dbReference>
<dbReference type="InterPro" id="IPR055454">
    <property type="entry name" value="CNOT1-like_NOT1_connector"/>
</dbReference>
<dbReference type="InterPro" id="IPR055104">
    <property type="entry name" value="CNOT1_1st"/>
</dbReference>
<dbReference type="InterPro" id="IPR032191">
    <property type="entry name" value="CNOT1_CAF1_bind"/>
</dbReference>
<dbReference type="InterPro" id="IPR024557">
    <property type="entry name" value="CNOT1_dom_4"/>
</dbReference>
<dbReference type="InterPro" id="IPR032194">
    <property type="entry name" value="CNOT1_HEAT"/>
</dbReference>
<dbReference type="InterPro" id="IPR032193">
    <property type="entry name" value="CNOT1_TTP_bind"/>
</dbReference>
<dbReference type="InterPro" id="IPR038535">
    <property type="entry name" value="CNOT1_TTP_bind_sf"/>
</dbReference>
<dbReference type="InterPro" id="IPR040398">
    <property type="entry name" value="Not1"/>
</dbReference>
<dbReference type="PANTHER" id="PTHR13162">
    <property type="entry name" value="CCR4-NOT TRANSCRIPTION COMPLEX"/>
    <property type="match status" value="1"/>
</dbReference>
<dbReference type="PANTHER" id="PTHR13162:SF8">
    <property type="entry name" value="CCR4-NOT TRANSCRIPTION COMPLEX SUBUNIT 1"/>
    <property type="match status" value="1"/>
</dbReference>
<dbReference type="Pfam" id="PF22940">
    <property type="entry name" value="CNOT1_1st"/>
    <property type="match status" value="1"/>
</dbReference>
<dbReference type="Pfam" id="PF16415">
    <property type="entry name" value="CNOT1_CAF1_bind"/>
    <property type="match status" value="1"/>
</dbReference>
<dbReference type="Pfam" id="PF16418">
    <property type="entry name" value="CNOT1_HEAT"/>
    <property type="match status" value="1"/>
</dbReference>
<dbReference type="Pfam" id="PF16417">
    <property type="entry name" value="CNOT1_TTP_bind"/>
    <property type="match status" value="1"/>
</dbReference>
<dbReference type="Pfam" id="PF12842">
    <property type="entry name" value="DUF3819"/>
    <property type="match status" value="1"/>
</dbReference>
<dbReference type="Pfam" id="PF04054">
    <property type="entry name" value="Not1"/>
    <property type="match status" value="1"/>
</dbReference>
<dbReference type="Pfam" id="PF23590">
    <property type="entry name" value="NOT1_connector"/>
    <property type="match status" value="1"/>
</dbReference>
<sequence length="2375" mass="266808">MNLDSLSLALSQISYLVDNLTKKNYRASQQEIQHIVNRHGPEADRHLLRCLFSHVDFSGDGKSSGKDFHQTQFLIQECASLITKPNFISTLSYAIDNPLHYQKSLKPAPHLFAQLSKVLKLSKVQEVIFGLALLNSSSPDLRGFAAQFIKQKLPDLLRSYIDADVSGNQEGGFQDIAIEVLHLLLSHLLFGQKGAFGVGQEQIDAFLKTLRRDFPQERCPVVLAPLLYPEKRDILMDRILPDSGGVAKTMMESSLADFMQEVGYGFCASIEECRNIIMQFGVREVTAAQVARVLGMMARTHSGLTDGIPLQSISAPGSGIWSDGKDKSEGAQAHTWNVEVLIDVLKELNPSLNFKEVTYELDHPGFQIRDSKGLHNVVYGIQRGLGMEVFPVDFIYRPWKHAEGQLSFIQHSLINPEVFCFADYPCHTVATDILKAPPEDDNREIATWKSLDLIESLLRLAEVGQYEQVKQLFSFPIKHCPDMLVLALLQINTSWHTLRHELISTLMPIFLGNHPNSAIILHYAWHGQGQSPSIRQLIMHAMAEWYMRGEQYDQAKLSRILDVAQDLKALSMLLNGTPFAFVIDLAALASRREYLKLDKWLTDKIREHGEPFIQACMTFLKRRCPSILGGLAPEKDQPKSAQLPAETLATMLACLQACAGSVSQELSETILTMVANCSNVMNKARQPPPGVMPKGRPPSASSLDAISPVQIDPLAGMASLSIGGSAAPHTQSMQGFPPNLGSAFSTPQSPAKAFPPLSTPNQTTAFSGIGGLSSQLPGGLGTGSLTGIGTGALGLPAVNNDPFVQRKLGTSGLNQPTFQQSKMKPSDLSQVWPEANQHFSKEIDDEANSYFQRIYNHPPHPTMSVDEVLEMLQRFKDSTIKREREVFNCMLRNLFEEYRFFPQYPDKELHITACLFGGIIEKGLVTYMALGLALRYVLEALRKPFGSKMYYFGIAALDRFKNRLKDYPQYCQHLASISHFMQFPHHLQEYIEYGQQSRDPPVKMQGSITTPGSIALAQAQAQAQVPAKAPLAGQVNTMVTTSTTTTVAKTVTVTKPTGVSFKKDVPPSINTTNIDTLLVATDQTERIVEPPENIQEKIAFIFNNLSQSNMTQKVEELKETVKEEFMPWVSQYLVMKRVSIEPNFHSLYSNFLDTLKNPEFNKMVLNETYRNIKVLLTSDKAAANFSDRSLLKNLGHWLGMITLAKNKPILHTDLDVKSLLLEAYVKGQQELLYVVPFVAKVLESSIRSLVFRPPNPWTMAIMNVLAELHQEHDLKLNLKFEIEVLCKNLALDINELKPGNLLKDKDRLKNLDEQLSAPKKDVKQPEELPAITTTTTSTTPATSTTCTATVPPQPQYSYHDINVYSLAGLAPHITLNPTIPLFQAHPQLKQCVRQAIERAVQELVHPVVDRSIKIAMTTCEQIVRKDFALDSEESRMRIAAHHMMRNLTAGMAMITCREPLLMSISTNLKNSFASALRTASPQQREMMDQAAAQLAQDNCELACCFIQKTAVEKAGPEMDKRLATEFELRKHARQEGRRYCDPVVLTYQAERMPEQIRLKVGGVDPKQLAVYEEFARNVPGFLPTNDLSQPTGFLAQPMKQAWATDDVAQIYDKCITELEQHLHAIPPTLAMNPQAQALRSLLEVVVLSRNSRDAIAALGLLQKAVEGLLDATSGADADLLLRYRECHLLVLKALQDGRAYGSPWCNKQITRCLIECRDEYKYNVEAVELLIRNHLVNMQQYDLHLAQSMENGLNYMAVAFAMQLVKILLVDERSVAHITEADLFHTIETLMRINAHSRGNAPEGLPQLMEVVRSNYEAMIDRAHGGPNFMMHSGISQASEYDDPPGLREKAEYLLREWVNLYHSAAAGRDSTKAFSAFVGQMHQQGILKTDDLITRFFRLCTEMCVEISYRAQAEQQHNPAANPTMIRAKCYHNLDAFVRLIALLVKHSGEATNTVTKINLLNKVLGIVVGVLLQDHDVRQSEFQQLPYHRIFIMLLLELNAPEHVLETINFQTLTAFCNTFHILRPTKAPGFVYAWLELISHRIFIARMLAHTPQQKGWPMYAQLLIDLFKYLAPFLRNVELTKPMQILYKGTLRVLLVLLHDFPEFLCDYHYGFCDVIPPNCIQLRNLILSAFPRNMRLPDPFTPNLKVDMLSEINIAPRILTNFTGVMPPQFKKDLDSYLKTRSPVTFLSDLRSNLQVSNEPGNRYNLQLINALVLYVGTQAIAHIHNKGSTPSMSTITHSAHMDIFQNLAVDLDTEGRYLFLNAIANQLRYPNSHTHYFSCTMLYLFAEANTEAIQEQITRVLLERLIVNRPHPWGLLITFIELIKNPAFKFWNHEFVHCAPEIEKLFQSVAQCCMGQKQAQQVMEGTGAS</sequence>
<feature type="chain" id="PRO_0000315542" description="CCR4-NOT transcription complex subunit 1">
    <location>
        <begin position="1"/>
        <end position="2375"/>
    </location>
</feature>
<feature type="region of interest" description="Disordered" evidence="3">
    <location>
        <begin position="725"/>
        <end position="770"/>
    </location>
</feature>
<feature type="region of interest" description="Interaction with ZFP36" evidence="1">
    <location>
        <begin position="799"/>
        <end position="1014"/>
    </location>
</feature>
<feature type="region of interest" description="Interaction with CNOT6, CNOT6L, CNOT7 and CNOT8" evidence="1">
    <location>
        <begin position="1089"/>
        <end position="1604"/>
    </location>
</feature>
<feature type="region of interest" description="Disordered" evidence="3">
    <location>
        <begin position="1314"/>
        <end position="1351"/>
    </location>
</feature>
<feature type="short sequence motif" description="LXXLL">
    <location>
        <begin position="153"/>
        <end position="157"/>
    </location>
</feature>
<feature type="short sequence motif" description="LXXLL">
    <location>
        <begin position="181"/>
        <end position="185"/>
    </location>
</feature>
<feature type="short sequence motif" description="LXXLL">
    <location>
        <begin position="223"/>
        <end position="227"/>
    </location>
</feature>
<feature type="short sequence motif" description="LXXLL">
    <location>
        <begin position="570"/>
        <end position="574"/>
    </location>
</feature>
<feature type="short sequence motif" description="LXXLL">
    <location>
        <begin position="1638"/>
        <end position="1642"/>
    </location>
</feature>
<feature type="short sequence motif" description="LXXLL">
    <location>
        <begin position="1941"/>
        <end position="1945"/>
    </location>
</feature>
<feature type="short sequence motif" description="LXXLL">
    <location>
        <begin position="2095"/>
        <end position="2099"/>
    </location>
</feature>
<feature type="compositionally biased region" description="Basic and acidic residues" evidence="3">
    <location>
        <begin position="1314"/>
        <end position="1326"/>
    </location>
</feature>
<feature type="compositionally biased region" description="Low complexity" evidence="3">
    <location>
        <begin position="1332"/>
        <end position="1349"/>
    </location>
</feature>
<feature type="modified residue" description="Phosphoserine" evidence="2">
    <location>
        <position position="318"/>
    </location>
</feature>
<feature type="modified residue" description="Phosphoserine" evidence="2">
    <location>
        <position position="1060"/>
    </location>
</feature>
<feature type="splice variant" id="VSP_030564" description="In isoform 3." evidence="12">
    <location>
        <begin position="1"/>
        <end position="1881"/>
    </location>
</feature>
<feature type="splice variant" id="VSP_030565" description="In isoform 2 and isoform 4." evidence="11 12">
    <original>P</original>
    <variation>PV</variation>
    <location>
        <position position="777"/>
    </location>
</feature>
<feature type="splice variant" id="VSP_030566" description="In isoform 2." evidence="11 12">
    <original>SKMKPS</original>
    <variation>T</variation>
    <location>
        <begin position="821"/>
        <end position="826"/>
    </location>
</feature>
<feature type="mutagenesis site" description="Homozygous mutant embryos show a small pancreas, exencephaly, eye defects and edema." evidence="7">
    <original>R</original>
    <variation>C</variation>
    <location>
        <position position="535"/>
    </location>
</feature>
<feature type="sequence conflict" description="In Ref. 3; AAH18281." evidence="13" ref="3">
    <original>I</original>
    <variation>F</variation>
    <location>
        <position position="2089"/>
    </location>
</feature>
<feature type="sequence conflict" description="In Ref. 2; BAC33267." evidence="13" ref="2">
    <original>N</original>
    <variation>S</variation>
    <location>
        <position position="2203"/>
    </location>
</feature>
<feature type="sequence conflict" description="In Ref. 2; BAC27364." evidence="13" ref="2">
    <original>G</original>
    <variation>D</variation>
    <location>
        <position position="2233"/>
    </location>
</feature>
<proteinExistence type="evidence at protein level"/>
<organism>
    <name type="scientific">Mus musculus</name>
    <name type="common">Mouse</name>
    <dbReference type="NCBI Taxonomy" id="10090"/>
    <lineage>
        <taxon>Eukaryota</taxon>
        <taxon>Metazoa</taxon>
        <taxon>Chordata</taxon>
        <taxon>Craniata</taxon>
        <taxon>Vertebrata</taxon>
        <taxon>Euteleostomi</taxon>
        <taxon>Mammalia</taxon>
        <taxon>Eutheria</taxon>
        <taxon>Euarchontoglires</taxon>
        <taxon>Glires</taxon>
        <taxon>Rodentia</taxon>
        <taxon>Myomorpha</taxon>
        <taxon>Muroidea</taxon>
        <taxon>Muridae</taxon>
        <taxon>Murinae</taxon>
        <taxon>Mus</taxon>
        <taxon>Mus</taxon>
    </lineage>
</organism>